<organism>
    <name type="scientific">Rattus norvegicus</name>
    <name type="common">Rat</name>
    <dbReference type="NCBI Taxonomy" id="10116"/>
    <lineage>
        <taxon>Eukaryota</taxon>
        <taxon>Metazoa</taxon>
        <taxon>Chordata</taxon>
        <taxon>Craniata</taxon>
        <taxon>Vertebrata</taxon>
        <taxon>Euteleostomi</taxon>
        <taxon>Mammalia</taxon>
        <taxon>Eutheria</taxon>
        <taxon>Euarchontoglires</taxon>
        <taxon>Glires</taxon>
        <taxon>Rodentia</taxon>
        <taxon>Myomorpha</taxon>
        <taxon>Muroidea</taxon>
        <taxon>Muridae</taxon>
        <taxon>Murinae</taxon>
        <taxon>Rattus</taxon>
    </lineage>
</organism>
<sequence>MGSSEPLPIVDSDKRRKKKRKTRATDSLPGKFEDVYQLTSELLGEGAYAKVQGAVSLQSGKEYAVKIIEKQAGHSRSRVFREVETLYQCQGNRNILELIEFFEDDTRFYLVFEKLQGGSILAHIQKRKHFNELEASRVVRDVATALDFLHTKGIAHRDLKPENILCESPEKVSPVKICDFDLGSGVKLNNSCTPITTPELTTPCGSAEYMAPEVVEVFRDEATFYDKRCDLWSLGVVLYIMLSGYPPFVGHCGADCGWDRGEVCRMCQNKLFESIQEGKYEFPDKDWAHISTEAKDLISKLLVRDAKQRLSAAQVLQHPWVQGQAPERGLPTPQVLQRNSSTMDLTLFAAEAIALNRQLSQHEENELAEEHEALAEGLCSMKLSPPSKSRLARRRALAHAGREANSCSTPAGL</sequence>
<name>MKNK1_RAT</name>
<gene>
    <name type="primary">Mknk1</name>
    <name type="synonym">Mnk1</name>
</gene>
<evidence type="ECO:0000250" key="1"/>
<evidence type="ECO:0000250" key="2">
    <source>
        <dbReference type="UniProtKB" id="O08605"/>
    </source>
</evidence>
<evidence type="ECO:0000250" key="3">
    <source>
        <dbReference type="UniProtKB" id="Q9BUB5"/>
    </source>
</evidence>
<evidence type="ECO:0000255" key="4">
    <source>
        <dbReference type="PROSITE-ProRule" id="PRU00159"/>
    </source>
</evidence>
<evidence type="ECO:0000255" key="5">
    <source>
        <dbReference type="PROSITE-ProRule" id="PRU10027"/>
    </source>
</evidence>
<evidence type="ECO:0000256" key="6">
    <source>
        <dbReference type="SAM" id="MobiDB-lite"/>
    </source>
</evidence>
<evidence type="ECO:0000305" key="7"/>
<feature type="chain" id="PRO_0000226969" description="MAP kinase-interacting serine/threonine-protein kinase 1">
    <location>
        <begin position="1"/>
        <end position="413"/>
    </location>
</feature>
<feature type="domain" description="Protein kinase" evidence="4">
    <location>
        <begin position="37"/>
        <end position="321"/>
    </location>
</feature>
<feature type="region of interest" description="Disordered" evidence="6">
    <location>
        <begin position="1"/>
        <end position="26"/>
    </location>
</feature>
<feature type="active site" description="Proton acceptor" evidence="4 5">
    <location>
        <position position="158"/>
    </location>
</feature>
<feature type="binding site" evidence="4">
    <location>
        <begin position="43"/>
        <end position="51"/>
    </location>
    <ligand>
        <name>ATP</name>
        <dbReference type="ChEBI" id="CHEBI:30616"/>
    </ligand>
</feature>
<feature type="binding site" evidence="4">
    <location>
        <position position="66"/>
    </location>
    <ligand>
        <name>ATP</name>
        <dbReference type="ChEBI" id="CHEBI:30616"/>
    </ligand>
</feature>
<feature type="modified residue" description="Phosphothreonine; by PAK2" evidence="2">
    <location>
        <position position="22"/>
    </location>
</feature>
<feature type="modified residue" description="Phosphoserine; by PAK2" evidence="2">
    <location>
        <position position="27"/>
    </location>
</feature>
<feature type="modified residue" description="Phosphoserine" evidence="3">
    <location>
        <position position="168"/>
    </location>
</feature>
<feature type="modified residue" description="Phosphoserine" evidence="3">
    <location>
        <position position="173"/>
    </location>
</feature>
<feature type="modified residue" description="Phosphothreonine" evidence="3">
    <location>
        <position position="197"/>
    </location>
</feature>
<feature type="modified residue" description="Phosphothreonine" evidence="3">
    <location>
        <position position="202"/>
    </location>
</feature>
<feature type="modified residue" description="Phosphothreonine" evidence="3">
    <location>
        <position position="332"/>
    </location>
</feature>
<protein>
    <recommendedName>
        <fullName>MAP kinase-interacting serine/threonine-protein kinase 1</fullName>
        <ecNumber evidence="3">2.7.11.1</ecNumber>
    </recommendedName>
    <alternativeName>
        <fullName>MAP kinase signal-integrating kinase 1</fullName>
        <shortName>MAPK signal-integrating kinase 1</shortName>
        <shortName>Mnk1</shortName>
    </alternativeName>
</protein>
<dbReference type="EC" id="2.7.11.1" evidence="3"/>
<dbReference type="EMBL" id="BC098754">
    <property type="protein sequence ID" value="AAH98754.1"/>
    <property type="molecule type" value="mRNA"/>
</dbReference>
<dbReference type="RefSeq" id="NP_001037732.1">
    <property type="nucleotide sequence ID" value="NM_001044267.1"/>
</dbReference>
<dbReference type="RefSeq" id="XP_006238760.1">
    <property type="nucleotide sequence ID" value="XM_006238698.5"/>
</dbReference>
<dbReference type="RefSeq" id="XP_006238761.1">
    <property type="nucleotide sequence ID" value="XM_006238699.3"/>
</dbReference>
<dbReference type="SMR" id="Q4G050"/>
<dbReference type="FunCoup" id="Q4G050">
    <property type="interactions" value="1170"/>
</dbReference>
<dbReference type="STRING" id="10116.ENSRNOP00000072679"/>
<dbReference type="GlyGen" id="Q4G050">
    <property type="glycosylation" value="1 site"/>
</dbReference>
<dbReference type="PhosphoSitePlus" id="Q4G050"/>
<dbReference type="PaxDb" id="10116-ENSRNOP00000061535"/>
<dbReference type="GeneID" id="500526"/>
<dbReference type="KEGG" id="rno:500526"/>
<dbReference type="UCSC" id="RGD:1559603">
    <property type="organism name" value="rat"/>
</dbReference>
<dbReference type="AGR" id="RGD:1559603"/>
<dbReference type="CTD" id="8569"/>
<dbReference type="RGD" id="1559603">
    <property type="gene designation" value="Mknk1"/>
</dbReference>
<dbReference type="VEuPathDB" id="HostDB:ENSRNOG00000010381"/>
<dbReference type="eggNOG" id="KOG0607">
    <property type="taxonomic scope" value="Eukaryota"/>
</dbReference>
<dbReference type="HOGENOM" id="CLU_000288_63_0_1"/>
<dbReference type="InParanoid" id="Q4G050"/>
<dbReference type="OrthoDB" id="5794026at2759"/>
<dbReference type="PhylomeDB" id="Q4G050"/>
<dbReference type="Reactome" id="R-RNO-1295596">
    <property type="pathway name" value="Spry regulation of FGF signaling"/>
</dbReference>
<dbReference type="PRO" id="PR:Q4G050"/>
<dbReference type="Proteomes" id="UP000002494">
    <property type="component" value="Chromosome 5"/>
</dbReference>
<dbReference type="Bgee" id="ENSRNOG00000010381">
    <property type="expression patterns" value="Expressed in pancreas and 20 other cell types or tissues"/>
</dbReference>
<dbReference type="ExpressionAtlas" id="Q4G050">
    <property type="expression patterns" value="baseline and differential"/>
</dbReference>
<dbReference type="GO" id="GO:0005737">
    <property type="term" value="C:cytoplasm"/>
    <property type="evidence" value="ECO:0000318"/>
    <property type="project" value="GO_Central"/>
</dbReference>
<dbReference type="GO" id="GO:0005634">
    <property type="term" value="C:nucleus"/>
    <property type="evidence" value="ECO:0000318"/>
    <property type="project" value="GO_Central"/>
</dbReference>
<dbReference type="GO" id="GO:0005524">
    <property type="term" value="F:ATP binding"/>
    <property type="evidence" value="ECO:0000266"/>
    <property type="project" value="RGD"/>
</dbReference>
<dbReference type="GO" id="GO:0009931">
    <property type="term" value="F:calcium-dependent protein serine/threonine kinase activity"/>
    <property type="evidence" value="ECO:0000318"/>
    <property type="project" value="GO_Central"/>
</dbReference>
<dbReference type="GO" id="GO:0004683">
    <property type="term" value="F:calcium/calmodulin-dependent protein kinase activity"/>
    <property type="evidence" value="ECO:0000318"/>
    <property type="project" value="GO_Central"/>
</dbReference>
<dbReference type="GO" id="GO:0005516">
    <property type="term" value="F:calmodulin binding"/>
    <property type="evidence" value="ECO:0000318"/>
    <property type="project" value="GO_Central"/>
</dbReference>
<dbReference type="GO" id="GO:0046872">
    <property type="term" value="F:metal ion binding"/>
    <property type="evidence" value="ECO:0007669"/>
    <property type="project" value="UniProtKB-KW"/>
</dbReference>
<dbReference type="GO" id="GO:0106310">
    <property type="term" value="F:protein serine kinase activity"/>
    <property type="evidence" value="ECO:0007669"/>
    <property type="project" value="RHEA"/>
</dbReference>
<dbReference type="GO" id="GO:0004674">
    <property type="term" value="F:protein serine/threonine kinase activity"/>
    <property type="evidence" value="ECO:0000315"/>
    <property type="project" value="RGD"/>
</dbReference>
<dbReference type="GO" id="GO:0097192">
    <property type="term" value="P:extrinsic apoptotic signaling pathway in absence of ligand"/>
    <property type="evidence" value="ECO:0000266"/>
    <property type="project" value="RGD"/>
</dbReference>
<dbReference type="GO" id="GO:0035556">
    <property type="term" value="P:intracellular signal transduction"/>
    <property type="evidence" value="ECO:0000266"/>
    <property type="project" value="RGD"/>
</dbReference>
<dbReference type="GO" id="GO:0006446">
    <property type="term" value="P:regulation of translational initiation"/>
    <property type="evidence" value="ECO:0000315"/>
    <property type="project" value="RGD"/>
</dbReference>
<dbReference type="GO" id="GO:0009651">
    <property type="term" value="P:response to salt stress"/>
    <property type="evidence" value="ECO:0000266"/>
    <property type="project" value="RGD"/>
</dbReference>
<dbReference type="CDD" id="cd14174">
    <property type="entry name" value="STKc_Mnk1"/>
    <property type="match status" value="1"/>
</dbReference>
<dbReference type="FunFam" id="1.10.510.10:FF:000119">
    <property type="entry name" value="Putative map kinase-interacting serine/threonine-protein kinase 1"/>
    <property type="match status" value="1"/>
</dbReference>
<dbReference type="FunFam" id="3.30.200.20:FF:000093">
    <property type="entry name" value="Putative map kinase-interacting serine/threonine-protein kinase 1"/>
    <property type="match status" value="1"/>
</dbReference>
<dbReference type="Gene3D" id="3.30.200.20">
    <property type="entry name" value="Phosphorylase Kinase, domain 1"/>
    <property type="match status" value="1"/>
</dbReference>
<dbReference type="Gene3D" id="1.10.510.10">
    <property type="entry name" value="Transferase(Phosphotransferase) domain 1"/>
    <property type="match status" value="1"/>
</dbReference>
<dbReference type="InterPro" id="IPR050205">
    <property type="entry name" value="CDPK_Ser/Thr_kinases"/>
</dbReference>
<dbReference type="InterPro" id="IPR011009">
    <property type="entry name" value="Kinase-like_dom_sf"/>
</dbReference>
<dbReference type="InterPro" id="IPR000719">
    <property type="entry name" value="Prot_kinase_dom"/>
</dbReference>
<dbReference type="InterPro" id="IPR017441">
    <property type="entry name" value="Protein_kinase_ATP_BS"/>
</dbReference>
<dbReference type="InterPro" id="IPR008271">
    <property type="entry name" value="Ser/Thr_kinase_AS"/>
</dbReference>
<dbReference type="PANTHER" id="PTHR24349">
    <property type="entry name" value="SERINE/THREONINE-PROTEIN KINASE"/>
    <property type="match status" value="1"/>
</dbReference>
<dbReference type="Pfam" id="PF00069">
    <property type="entry name" value="Pkinase"/>
    <property type="match status" value="1"/>
</dbReference>
<dbReference type="SMART" id="SM00220">
    <property type="entry name" value="S_TKc"/>
    <property type="match status" value="1"/>
</dbReference>
<dbReference type="SUPFAM" id="SSF56112">
    <property type="entry name" value="Protein kinase-like (PK-like)"/>
    <property type="match status" value="1"/>
</dbReference>
<dbReference type="PROSITE" id="PS00107">
    <property type="entry name" value="PROTEIN_KINASE_ATP"/>
    <property type="match status" value="1"/>
</dbReference>
<dbReference type="PROSITE" id="PS50011">
    <property type="entry name" value="PROTEIN_KINASE_DOM"/>
    <property type="match status" value="1"/>
</dbReference>
<dbReference type="PROSITE" id="PS00108">
    <property type="entry name" value="PROTEIN_KINASE_ST"/>
    <property type="match status" value="1"/>
</dbReference>
<proteinExistence type="evidence at transcript level"/>
<comment type="function">
    <text evidence="1">May play a role in the response to environmental stress and cytokines. Appears to regulate translation by phosphorylating EIF4E, thus increasing the affinity of this protein for the 7-methylguanosine-containing mRNA cap (By similarity).</text>
</comment>
<comment type="catalytic activity">
    <reaction evidence="3">
        <text>L-seryl-[protein] + ATP = O-phospho-L-seryl-[protein] + ADP + H(+)</text>
        <dbReference type="Rhea" id="RHEA:17989"/>
        <dbReference type="Rhea" id="RHEA-COMP:9863"/>
        <dbReference type="Rhea" id="RHEA-COMP:11604"/>
        <dbReference type="ChEBI" id="CHEBI:15378"/>
        <dbReference type="ChEBI" id="CHEBI:29999"/>
        <dbReference type="ChEBI" id="CHEBI:30616"/>
        <dbReference type="ChEBI" id="CHEBI:83421"/>
        <dbReference type="ChEBI" id="CHEBI:456216"/>
        <dbReference type="EC" id="2.7.11.1"/>
    </reaction>
</comment>
<comment type="catalytic activity">
    <reaction evidence="3">
        <text>L-threonyl-[protein] + ATP = O-phospho-L-threonyl-[protein] + ADP + H(+)</text>
        <dbReference type="Rhea" id="RHEA:46608"/>
        <dbReference type="Rhea" id="RHEA-COMP:11060"/>
        <dbReference type="Rhea" id="RHEA-COMP:11605"/>
        <dbReference type="ChEBI" id="CHEBI:15378"/>
        <dbReference type="ChEBI" id="CHEBI:30013"/>
        <dbReference type="ChEBI" id="CHEBI:30616"/>
        <dbReference type="ChEBI" id="CHEBI:61977"/>
        <dbReference type="ChEBI" id="CHEBI:456216"/>
        <dbReference type="EC" id="2.7.11.1"/>
    </reaction>
</comment>
<comment type="cofactor">
    <cofactor evidence="3">
        <name>Mg(2+)</name>
        <dbReference type="ChEBI" id="CHEBI:18420"/>
    </cofactor>
</comment>
<comment type="activity regulation">
    <text evidence="1">Phosphorylated and activated by the p38 kinases and kinases in the Erk pathway.</text>
</comment>
<comment type="subunit">
    <text evidence="1">Interacts with the C-terminal regions of EIF4G1 and EIF4G2. Also binds to dephosphorylated ERK1 and ERK2, and to the p38 kinases (By similarity).</text>
</comment>
<comment type="PTM">
    <text evidence="1">Dual phosphorylation of Thr-197 and Thr-202 activates the kinase. Phosphorylation of Thr-332 activates the kinase. MAPK3/ERK1 is one of the kinases which activate MKNK1/MNK1. Phosphorylation by PAK2 leads to a reduced phosphorylation of EIF4G1 (By similarity).</text>
</comment>
<comment type="similarity">
    <text evidence="7">Belongs to the protein kinase superfamily. CAMK Ser/Thr protein kinase family.</text>
</comment>
<reference key="1">
    <citation type="journal article" date="2004" name="Genome Res.">
        <title>The status, quality, and expansion of the NIH full-length cDNA project: the Mammalian Gene Collection (MGC).</title>
        <authorList>
            <consortium name="The MGC Project Team"/>
        </authorList>
    </citation>
    <scope>NUCLEOTIDE SEQUENCE [LARGE SCALE MRNA]</scope>
    <source>
        <tissue>Liver</tissue>
    </source>
</reference>
<keyword id="KW-0067">ATP-binding</keyword>
<keyword id="KW-0418">Kinase</keyword>
<keyword id="KW-0460">Magnesium</keyword>
<keyword id="KW-0479">Metal-binding</keyword>
<keyword id="KW-0547">Nucleotide-binding</keyword>
<keyword id="KW-0597">Phosphoprotein</keyword>
<keyword id="KW-1185">Reference proteome</keyword>
<keyword id="KW-0723">Serine/threonine-protein kinase</keyword>
<keyword id="KW-0808">Transferase</keyword>
<keyword id="KW-0810">Translation regulation</keyword>
<accession>Q4G050</accession>